<dbReference type="EMBL" id="CP000821">
    <property type="protein sequence ID" value="ABV35747.1"/>
    <property type="molecule type" value="Genomic_DNA"/>
</dbReference>
<dbReference type="RefSeq" id="WP_012141483.1">
    <property type="nucleotide sequence ID" value="NC_009831.1"/>
</dbReference>
<dbReference type="SMR" id="A8FSC4"/>
<dbReference type="STRING" id="425104.Ssed_1136"/>
<dbReference type="KEGG" id="sse:Ssed_1136"/>
<dbReference type="eggNOG" id="COG3004">
    <property type="taxonomic scope" value="Bacteria"/>
</dbReference>
<dbReference type="HOGENOM" id="CLU_015803_1_0_6"/>
<dbReference type="OrthoDB" id="9808135at2"/>
<dbReference type="Proteomes" id="UP000002015">
    <property type="component" value="Chromosome"/>
</dbReference>
<dbReference type="GO" id="GO:0005886">
    <property type="term" value="C:plasma membrane"/>
    <property type="evidence" value="ECO:0007669"/>
    <property type="project" value="UniProtKB-SubCell"/>
</dbReference>
<dbReference type="GO" id="GO:0015385">
    <property type="term" value="F:sodium:proton antiporter activity"/>
    <property type="evidence" value="ECO:0007669"/>
    <property type="project" value="TreeGrafter"/>
</dbReference>
<dbReference type="GO" id="GO:0006885">
    <property type="term" value="P:regulation of pH"/>
    <property type="evidence" value="ECO:0007669"/>
    <property type="project" value="InterPro"/>
</dbReference>
<dbReference type="Gene3D" id="1.20.1530.10">
    <property type="entry name" value="Na+/H+ antiporter like domain"/>
    <property type="match status" value="1"/>
</dbReference>
<dbReference type="HAMAP" id="MF_01844">
    <property type="entry name" value="NhaA"/>
    <property type="match status" value="1"/>
</dbReference>
<dbReference type="InterPro" id="IPR023171">
    <property type="entry name" value="Na/H_antiporter_dom_sf"/>
</dbReference>
<dbReference type="InterPro" id="IPR004670">
    <property type="entry name" value="NhaA"/>
</dbReference>
<dbReference type="NCBIfam" id="TIGR00773">
    <property type="entry name" value="NhaA"/>
    <property type="match status" value="1"/>
</dbReference>
<dbReference type="NCBIfam" id="NF007111">
    <property type="entry name" value="PRK09560.1"/>
    <property type="match status" value="1"/>
</dbReference>
<dbReference type="NCBIfam" id="NF007112">
    <property type="entry name" value="PRK09561.1"/>
    <property type="match status" value="1"/>
</dbReference>
<dbReference type="PANTHER" id="PTHR30341:SF0">
    <property type="entry name" value="NA(+)_H(+) ANTIPORTER NHAA"/>
    <property type="match status" value="1"/>
</dbReference>
<dbReference type="PANTHER" id="PTHR30341">
    <property type="entry name" value="SODIUM ION/PROTON ANTIPORTER NHAA-RELATED"/>
    <property type="match status" value="1"/>
</dbReference>
<dbReference type="Pfam" id="PF06965">
    <property type="entry name" value="Na_H_antiport_1"/>
    <property type="match status" value="1"/>
</dbReference>
<evidence type="ECO:0000255" key="1">
    <source>
        <dbReference type="HAMAP-Rule" id="MF_01844"/>
    </source>
</evidence>
<reference key="1">
    <citation type="submission" date="2007-08" db="EMBL/GenBank/DDBJ databases">
        <title>Complete sequence of Shewanella sediminis HAW-EB3.</title>
        <authorList>
            <consortium name="US DOE Joint Genome Institute"/>
            <person name="Copeland A."/>
            <person name="Lucas S."/>
            <person name="Lapidus A."/>
            <person name="Barry K."/>
            <person name="Glavina del Rio T."/>
            <person name="Dalin E."/>
            <person name="Tice H."/>
            <person name="Pitluck S."/>
            <person name="Chertkov O."/>
            <person name="Brettin T."/>
            <person name="Bruce D."/>
            <person name="Detter J.C."/>
            <person name="Han C."/>
            <person name="Schmutz J."/>
            <person name="Larimer F."/>
            <person name="Land M."/>
            <person name="Hauser L."/>
            <person name="Kyrpides N."/>
            <person name="Kim E."/>
            <person name="Zhao J.-S."/>
            <person name="Richardson P."/>
        </authorList>
    </citation>
    <scope>NUCLEOTIDE SEQUENCE [LARGE SCALE GENOMIC DNA]</scope>
    <source>
        <strain>HAW-EB3</strain>
    </source>
</reference>
<keyword id="KW-0050">Antiport</keyword>
<keyword id="KW-0997">Cell inner membrane</keyword>
<keyword id="KW-1003">Cell membrane</keyword>
<keyword id="KW-0406">Ion transport</keyword>
<keyword id="KW-0472">Membrane</keyword>
<keyword id="KW-1185">Reference proteome</keyword>
<keyword id="KW-0915">Sodium</keyword>
<keyword id="KW-0739">Sodium transport</keyword>
<keyword id="KW-0812">Transmembrane</keyword>
<keyword id="KW-1133">Transmembrane helix</keyword>
<keyword id="KW-0813">Transport</keyword>
<proteinExistence type="inferred from homology"/>
<name>NHAA_SHESH</name>
<organism>
    <name type="scientific">Shewanella sediminis (strain HAW-EB3)</name>
    <dbReference type="NCBI Taxonomy" id="425104"/>
    <lineage>
        <taxon>Bacteria</taxon>
        <taxon>Pseudomonadati</taxon>
        <taxon>Pseudomonadota</taxon>
        <taxon>Gammaproteobacteria</taxon>
        <taxon>Alteromonadales</taxon>
        <taxon>Shewanellaceae</taxon>
        <taxon>Shewanella</taxon>
    </lineage>
</organism>
<protein>
    <recommendedName>
        <fullName evidence="1">Na(+)/H(+) antiporter NhaA</fullName>
    </recommendedName>
    <alternativeName>
        <fullName evidence="1">Sodium/proton antiporter NhaA</fullName>
    </alternativeName>
</protein>
<sequence length="399" mass="41908">MERAIKNFLSQESAGGILLMIAVALAMIMANSPLSGMYQGFLDTEMQVRVGSLDIDKTLIHWINDGLMALFFMLIGLEVKRELLEGALSSAAQASLPTFAAVGGMVFPAGIYLLFNYGDPVTQAGWAIPAATDIAFALGVMALLGSRVPVSLKVFLLALAIIDDLGVVVIIAMFYSTDLSMLSLIVAGIAILGLVGLNRKGVTALGPYGVVGLILWIAVLKSGVHATLAGVIIAFCIPLRAKDGSSPSESLEHSLHPWSTFIILPIFAFANAGVDLSPMSFGDLLSPVPVGIALGLLLGKPLGVLVFSYIGVKLKMAVLPEGMGWKHIAPVALMCGIGFTMSMFISSLAFVGDAEAYGDFARLGILVGSFASAIIGYFWLAKVLPEVDVAKESKKGEIA</sequence>
<comment type="function">
    <text evidence="1">Na(+)/H(+) antiporter that extrudes sodium in exchange for external protons.</text>
</comment>
<comment type="catalytic activity">
    <reaction evidence="1">
        <text>Na(+)(in) + 2 H(+)(out) = Na(+)(out) + 2 H(+)(in)</text>
        <dbReference type="Rhea" id="RHEA:29251"/>
        <dbReference type="ChEBI" id="CHEBI:15378"/>
        <dbReference type="ChEBI" id="CHEBI:29101"/>
    </reaction>
    <physiologicalReaction direction="left-to-right" evidence="1">
        <dbReference type="Rhea" id="RHEA:29252"/>
    </physiologicalReaction>
</comment>
<comment type="subcellular location">
    <subcellularLocation>
        <location evidence="1">Cell inner membrane</location>
        <topology evidence="1">Multi-pass membrane protein</topology>
    </subcellularLocation>
</comment>
<comment type="similarity">
    <text evidence="1">Belongs to the NhaA Na(+)/H(+) (TC 2.A.33) antiporter family.</text>
</comment>
<gene>
    <name evidence="1" type="primary">nhaA</name>
    <name type="ordered locus">Ssed_1136</name>
</gene>
<accession>A8FSC4</accession>
<feature type="chain" id="PRO_0000334430" description="Na(+)/H(+) antiporter NhaA">
    <location>
        <begin position="1"/>
        <end position="399"/>
    </location>
</feature>
<feature type="transmembrane region" description="Helical" evidence="1">
    <location>
        <begin position="14"/>
        <end position="34"/>
    </location>
</feature>
<feature type="transmembrane region" description="Helical" evidence="1">
    <location>
        <begin position="59"/>
        <end position="79"/>
    </location>
</feature>
<feature type="transmembrane region" description="Helical" evidence="1">
    <location>
        <begin position="95"/>
        <end position="115"/>
    </location>
</feature>
<feature type="transmembrane region" description="Helical" evidence="1">
    <location>
        <begin position="124"/>
        <end position="144"/>
    </location>
</feature>
<feature type="transmembrane region" description="Helical" evidence="1">
    <location>
        <begin position="154"/>
        <end position="174"/>
    </location>
</feature>
<feature type="transmembrane region" description="Helical" evidence="1">
    <location>
        <begin position="177"/>
        <end position="197"/>
    </location>
</feature>
<feature type="transmembrane region" description="Helical" evidence="1">
    <location>
        <begin position="213"/>
        <end position="233"/>
    </location>
</feature>
<feature type="transmembrane region" description="Helical" evidence="1">
    <location>
        <begin position="261"/>
        <end position="281"/>
    </location>
</feature>
<feature type="transmembrane region" description="Helical" evidence="1">
    <location>
        <begin position="290"/>
        <end position="310"/>
    </location>
</feature>
<feature type="transmembrane region" description="Helical" evidence="1">
    <location>
        <begin position="331"/>
        <end position="351"/>
    </location>
</feature>
<feature type="transmembrane region" description="Helical" evidence="1">
    <location>
        <begin position="363"/>
        <end position="383"/>
    </location>
</feature>